<accession>P65695</accession>
<accession>Q99TG4</accession>
<evidence type="ECO:0000255" key="1">
    <source>
        <dbReference type="HAMAP-Rule" id="MF_00339"/>
    </source>
</evidence>
<evidence type="ECO:0000305" key="2"/>
<protein>
    <recommendedName>
        <fullName evidence="1">ATP-dependent 6-phosphofructokinase</fullName>
        <shortName evidence="1">ATP-PFK</shortName>
        <shortName evidence="1">Phosphofructokinase</shortName>
        <ecNumber evidence="1">2.7.1.11</ecNumber>
    </recommendedName>
    <alternativeName>
        <fullName evidence="1">Phosphohexokinase</fullName>
    </alternativeName>
</protein>
<gene>
    <name evidence="1" type="primary">pfkA</name>
    <name type="synonym">pfk</name>
    <name type="ordered locus">MW1642</name>
</gene>
<dbReference type="EC" id="2.7.1.11" evidence="1"/>
<dbReference type="EMBL" id="BA000033">
    <property type="protein sequence ID" value="BAB95507.1"/>
    <property type="status" value="ALT_INIT"/>
    <property type="molecule type" value="Genomic_DNA"/>
</dbReference>
<dbReference type="RefSeq" id="WP_000717561.1">
    <property type="nucleotide sequence ID" value="NC_003923.1"/>
</dbReference>
<dbReference type="SMR" id="P65695"/>
<dbReference type="KEGG" id="sam:MW1642"/>
<dbReference type="HOGENOM" id="CLU_020655_0_1_9"/>
<dbReference type="UniPathway" id="UPA00109">
    <property type="reaction ID" value="UER00182"/>
</dbReference>
<dbReference type="GO" id="GO:0005945">
    <property type="term" value="C:6-phosphofructokinase complex"/>
    <property type="evidence" value="ECO:0007669"/>
    <property type="project" value="TreeGrafter"/>
</dbReference>
<dbReference type="GO" id="GO:0003872">
    <property type="term" value="F:6-phosphofructokinase activity"/>
    <property type="evidence" value="ECO:0007669"/>
    <property type="project" value="UniProtKB-UniRule"/>
</dbReference>
<dbReference type="GO" id="GO:0016208">
    <property type="term" value="F:AMP binding"/>
    <property type="evidence" value="ECO:0007669"/>
    <property type="project" value="TreeGrafter"/>
</dbReference>
<dbReference type="GO" id="GO:0005524">
    <property type="term" value="F:ATP binding"/>
    <property type="evidence" value="ECO:0007669"/>
    <property type="project" value="UniProtKB-KW"/>
</dbReference>
<dbReference type="GO" id="GO:0070095">
    <property type="term" value="F:fructose-6-phosphate binding"/>
    <property type="evidence" value="ECO:0007669"/>
    <property type="project" value="TreeGrafter"/>
</dbReference>
<dbReference type="GO" id="GO:0042802">
    <property type="term" value="F:identical protein binding"/>
    <property type="evidence" value="ECO:0007669"/>
    <property type="project" value="TreeGrafter"/>
</dbReference>
<dbReference type="GO" id="GO:0046872">
    <property type="term" value="F:metal ion binding"/>
    <property type="evidence" value="ECO:0007669"/>
    <property type="project" value="UniProtKB-KW"/>
</dbReference>
<dbReference type="GO" id="GO:0048029">
    <property type="term" value="F:monosaccharide binding"/>
    <property type="evidence" value="ECO:0007669"/>
    <property type="project" value="TreeGrafter"/>
</dbReference>
<dbReference type="GO" id="GO:0061621">
    <property type="term" value="P:canonical glycolysis"/>
    <property type="evidence" value="ECO:0007669"/>
    <property type="project" value="TreeGrafter"/>
</dbReference>
<dbReference type="GO" id="GO:0030388">
    <property type="term" value="P:fructose 1,6-bisphosphate metabolic process"/>
    <property type="evidence" value="ECO:0007669"/>
    <property type="project" value="TreeGrafter"/>
</dbReference>
<dbReference type="GO" id="GO:0006002">
    <property type="term" value="P:fructose 6-phosphate metabolic process"/>
    <property type="evidence" value="ECO:0007669"/>
    <property type="project" value="InterPro"/>
</dbReference>
<dbReference type="FunFam" id="3.40.50.450:FF:000001">
    <property type="entry name" value="ATP-dependent 6-phosphofructokinase"/>
    <property type="match status" value="1"/>
</dbReference>
<dbReference type="FunFam" id="3.40.50.460:FF:000002">
    <property type="entry name" value="ATP-dependent 6-phosphofructokinase"/>
    <property type="match status" value="1"/>
</dbReference>
<dbReference type="Gene3D" id="3.40.50.450">
    <property type="match status" value="1"/>
</dbReference>
<dbReference type="Gene3D" id="3.40.50.460">
    <property type="entry name" value="Phosphofructokinase domain"/>
    <property type="match status" value="1"/>
</dbReference>
<dbReference type="HAMAP" id="MF_00339">
    <property type="entry name" value="Phosphofructokinase_I_B1"/>
    <property type="match status" value="1"/>
</dbReference>
<dbReference type="InterPro" id="IPR022953">
    <property type="entry name" value="ATP_PFK"/>
</dbReference>
<dbReference type="InterPro" id="IPR012003">
    <property type="entry name" value="ATP_PFK_prok-type"/>
</dbReference>
<dbReference type="InterPro" id="IPR012828">
    <property type="entry name" value="PFKA_ATP_prok"/>
</dbReference>
<dbReference type="InterPro" id="IPR015912">
    <property type="entry name" value="Phosphofructokinase_CS"/>
</dbReference>
<dbReference type="InterPro" id="IPR000023">
    <property type="entry name" value="Phosphofructokinase_dom"/>
</dbReference>
<dbReference type="InterPro" id="IPR035966">
    <property type="entry name" value="PKF_sf"/>
</dbReference>
<dbReference type="NCBIfam" id="TIGR02482">
    <property type="entry name" value="PFKA_ATP"/>
    <property type="match status" value="1"/>
</dbReference>
<dbReference type="NCBIfam" id="NF002872">
    <property type="entry name" value="PRK03202.1"/>
    <property type="match status" value="1"/>
</dbReference>
<dbReference type="PANTHER" id="PTHR13697:SF4">
    <property type="entry name" value="ATP-DEPENDENT 6-PHOSPHOFRUCTOKINASE"/>
    <property type="match status" value="1"/>
</dbReference>
<dbReference type="PANTHER" id="PTHR13697">
    <property type="entry name" value="PHOSPHOFRUCTOKINASE"/>
    <property type="match status" value="1"/>
</dbReference>
<dbReference type="Pfam" id="PF00365">
    <property type="entry name" value="PFK"/>
    <property type="match status" value="1"/>
</dbReference>
<dbReference type="PIRSF" id="PIRSF000532">
    <property type="entry name" value="ATP_PFK_prok"/>
    <property type="match status" value="1"/>
</dbReference>
<dbReference type="PRINTS" id="PR00476">
    <property type="entry name" value="PHFRCTKINASE"/>
</dbReference>
<dbReference type="SUPFAM" id="SSF53784">
    <property type="entry name" value="Phosphofructokinase"/>
    <property type="match status" value="1"/>
</dbReference>
<dbReference type="PROSITE" id="PS00433">
    <property type="entry name" value="PHOSPHOFRUCTOKINASE"/>
    <property type="match status" value="1"/>
</dbReference>
<reference key="1">
    <citation type="journal article" date="2002" name="Lancet">
        <title>Genome and virulence determinants of high virulence community-acquired MRSA.</title>
        <authorList>
            <person name="Baba T."/>
            <person name="Takeuchi F."/>
            <person name="Kuroda M."/>
            <person name="Yuzawa H."/>
            <person name="Aoki K."/>
            <person name="Oguchi A."/>
            <person name="Nagai Y."/>
            <person name="Iwama N."/>
            <person name="Asano K."/>
            <person name="Naimi T."/>
            <person name="Kuroda H."/>
            <person name="Cui L."/>
            <person name="Yamamoto K."/>
            <person name="Hiramatsu K."/>
        </authorList>
    </citation>
    <scope>NUCLEOTIDE SEQUENCE [LARGE SCALE GENOMIC DNA]</scope>
    <source>
        <strain>MW2</strain>
    </source>
</reference>
<sequence length="322" mass="34840">MKKIAVLTSGGDSPGMNAAVRAVVRTAIYNEIEVYGVYHGYQGLLNDDIHKLELGSVGDTIQRGGTFLYSARCPEFKEQEVRKVAIENLRKRGIEGLVVIGGDGSYRGAQRISEECKEIQTIGIPGTIDNDINGTDFTIGFDTALNTIIGLVDKIRDTASSHARTFIIEAMGRDCGDLALWAGLSVGAETIVVPEVKTDIKEIADKIEQGIKRGKKHSIVLVAEGCMTAQDCQKELSQYINVDNRVSVLGHVQRGGSPTGADRVLASRLGGYAVDLLMQGETAKGVGIKNNKIVATSFDEIFDGKDHKFDYSLYELANKLSI</sequence>
<name>PFKA_STAAW</name>
<keyword id="KW-0021">Allosteric enzyme</keyword>
<keyword id="KW-0067">ATP-binding</keyword>
<keyword id="KW-0963">Cytoplasm</keyword>
<keyword id="KW-0324">Glycolysis</keyword>
<keyword id="KW-0418">Kinase</keyword>
<keyword id="KW-0460">Magnesium</keyword>
<keyword id="KW-0479">Metal-binding</keyword>
<keyword id="KW-0547">Nucleotide-binding</keyword>
<keyword id="KW-0808">Transferase</keyword>
<comment type="function">
    <text evidence="1">Catalyzes the phosphorylation of D-fructose 6-phosphate to fructose 1,6-bisphosphate by ATP, the first committing step of glycolysis.</text>
</comment>
<comment type="catalytic activity">
    <reaction evidence="1">
        <text>beta-D-fructose 6-phosphate + ATP = beta-D-fructose 1,6-bisphosphate + ADP + H(+)</text>
        <dbReference type="Rhea" id="RHEA:16109"/>
        <dbReference type="ChEBI" id="CHEBI:15378"/>
        <dbReference type="ChEBI" id="CHEBI:30616"/>
        <dbReference type="ChEBI" id="CHEBI:32966"/>
        <dbReference type="ChEBI" id="CHEBI:57634"/>
        <dbReference type="ChEBI" id="CHEBI:456216"/>
        <dbReference type="EC" id="2.7.1.11"/>
    </reaction>
</comment>
<comment type="cofactor">
    <cofactor evidence="1">
        <name>Mg(2+)</name>
        <dbReference type="ChEBI" id="CHEBI:18420"/>
    </cofactor>
</comment>
<comment type="activity regulation">
    <text evidence="1">Allosterically activated by ADP and other diphosphonucleosides, and allosterically inhibited by phosphoenolpyruvate.</text>
</comment>
<comment type="pathway">
    <text evidence="1">Carbohydrate degradation; glycolysis; D-glyceraldehyde 3-phosphate and glycerone phosphate from D-glucose: step 3/4.</text>
</comment>
<comment type="subunit">
    <text evidence="1">Homotetramer.</text>
</comment>
<comment type="subcellular location">
    <subcellularLocation>
        <location evidence="1">Cytoplasm</location>
    </subcellularLocation>
</comment>
<comment type="similarity">
    <text evidence="1">Belongs to the phosphofructokinase type A (PFKA) family. ATP-dependent PFK group I subfamily. Prokaryotic clade 'B1' sub-subfamily.</text>
</comment>
<comment type="sequence caution" evidence="2">
    <conflict type="erroneous initiation">
        <sequence resource="EMBL-CDS" id="BAB95507"/>
    </conflict>
</comment>
<organism>
    <name type="scientific">Staphylococcus aureus (strain MW2)</name>
    <dbReference type="NCBI Taxonomy" id="196620"/>
    <lineage>
        <taxon>Bacteria</taxon>
        <taxon>Bacillati</taxon>
        <taxon>Bacillota</taxon>
        <taxon>Bacilli</taxon>
        <taxon>Bacillales</taxon>
        <taxon>Staphylococcaceae</taxon>
        <taxon>Staphylococcus</taxon>
    </lineage>
</organism>
<feature type="chain" id="PRO_0000111981" description="ATP-dependent 6-phosphofructokinase">
    <location>
        <begin position="1"/>
        <end position="322"/>
    </location>
</feature>
<feature type="active site" description="Proton acceptor" evidence="1">
    <location>
        <position position="129"/>
    </location>
</feature>
<feature type="binding site" evidence="1">
    <location>
        <position position="11"/>
    </location>
    <ligand>
        <name>ATP</name>
        <dbReference type="ChEBI" id="CHEBI:30616"/>
    </ligand>
</feature>
<feature type="binding site" evidence="1">
    <location>
        <begin position="21"/>
        <end position="25"/>
    </location>
    <ligand>
        <name>ADP</name>
        <dbReference type="ChEBI" id="CHEBI:456216"/>
        <note>allosteric activator; ligand shared between dimeric partners</note>
    </ligand>
</feature>
<feature type="binding site" evidence="1">
    <location>
        <begin position="72"/>
        <end position="73"/>
    </location>
    <ligand>
        <name>ATP</name>
        <dbReference type="ChEBI" id="CHEBI:30616"/>
    </ligand>
</feature>
<feature type="binding site" evidence="1">
    <location>
        <begin position="102"/>
        <end position="105"/>
    </location>
    <ligand>
        <name>ATP</name>
        <dbReference type="ChEBI" id="CHEBI:30616"/>
    </ligand>
</feature>
<feature type="binding site" evidence="1">
    <location>
        <position position="103"/>
    </location>
    <ligand>
        <name>Mg(2+)</name>
        <dbReference type="ChEBI" id="CHEBI:18420"/>
        <note>catalytic</note>
    </ligand>
</feature>
<feature type="binding site" description="in other chain" evidence="1">
    <location>
        <begin position="127"/>
        <end position="129"/>
    </location>
    <ligand>
        <name>substrate</name>
        <note>ligand shared between dimeric partners</note>
    </ligand>
</feature>
<feature type="binding site" description="in other chain" evidence="1">
    <location>
        <position position="156"/>
    </location>
    <ligand>
        <name>ADP</name>
        <dbReference type="ChEBI" id="CHEBI:456216"/>
        <note>allosteric activator; ligand shared between dimeric partners</note>
    </ligand>
</feature>
<feature type="binding site" evidence="1">
    <location>
        <position position="164"/>
    </location>
    <ligand>
        <name>substrate</name>
        <note>ligand shared between dimeric partners</note>
    </ligand>
</feature>
<feature type="binding site" description="in other chain" evidence="1">
    <location>
        <begin position="171"/>
        <end position="173"/>
    </location>
    <ligand>
        <name>substrate</name>
        <note>ligand shared between dimeric partners</note>
    </ligand>
</feature>
<feature type="binding site" description="in other chain" evidence="1">
    <location>
        <begin position="187"/>
        <end position="189"/>
    </location>
    <ligand>
        <name>ADP</name>
        <dbReference type="ChEBI" id="CHEBI:456216"/>
        <note>allosteric activator; ligand shared between dimeric partners</note>
    </ligand>
</feature>
<feature type="binding site" description="in other chain" evidence="1">
    <location>
        <position position="213"/>
    </location>
    <ligand>
        <name>ADP</name>
        <dbReference type="ChEBI" id="CHEBI:456216"/>
        <note>allosteric activator; ligand shared between dimeric partners</note>
    </ligand>
</feature>
<feature type="binding site" description="in other chain" evidence="1">
    <location>
        <begin position="215"/>
        <end position="217"/>
    </location>
    <ligand>
        <name>ADP</name>
        <dbReference type="ChEBI" id="CHEBI:456216"/>
        <note>allosteric activator; ligand shared between dimeric partners</note>
    </ligand>
</feature>
<feature type="binding site" description="in other chain" evidence="1">
    <location>
        <position position="224"/>
    </location>
    <ligand>
        <name>substrate</name>
        <note>ligand shared between dimeric partners</note>
    </ligand>
</feature>
<feature type="binding site" evidence="1">
    <location>
        <position position="245"/>
    </location>
    <ligand>
        <name>substrate</name>
        <note>ligand shared between dimeric partners</note>
    </ligand>
</feature>
<feature type="binding site" description="in other chain" evidence="1">
    <location>
        <begin position="251"/>
        <end position="254"/>
    </location>
    <ligand>
        <name>substrate</name>
        <note>ligand shared between dimeric partners</note>
    </ligand>
</feature>
<proteinExistence type="inferred from homology"/>